<sequence>MEQIAARVTYINLSPDELIQHAVKNGEGVLSSTGALAVTTGKRTGRSPKDRFIVKDEQTADQVAWGNINQPVEQRTFDQLWERALRYLSERAVYISHLQVGADDNYFLPLKVVTEFAWHNLFACDLFIRPSGDHANGKPSWVILSAPGLKTDPERDGVNSDGAVMINLSQRRVLLVGMPYAGEMKKAMFSVLNYLLPPHDVLPMHCAANAGQSGDVALFFGLSGTGKTTLSADPHRFLIGDDEHGWSATSVFNFEGGCYAKCIDLSQEREPMIWNAIRHGAIMENVVLDENGVPDYADARLTQNSRAAYPREYIPLRVENNRGRPPDAVLFLTCDLDGVLPPVALLTKEQAAYYFLSGYTALVGSTEVGSVKGVTSTFSTCFGAPFFPRPPTVYAELLMKRIEATGCQVYLVNTGWTGGAYGEGGERFSIPTTRAIVNAVLSGKLKEGPTEVLSGFNLTIPKSALGVDDHLLNPRKTWEDVSAYDARAQRLIQKFRENFEKFKVLAAIREAGPSDVH</sequence>
<name>PCKA_COXBR</name>
<keyword id="KW-0067">ATP-binding</keyword>
<keyword id="KW-0963">Cytoplasm</keyword>
<keyword id="KW-0210">Decarboxylase</keyword>
<keyword id="KW-0312">Gluconeogenesis</keyword>
<keyword id="KW-0456">Lyase</keyword>
<keyword id="KW-0464">Manganese</keyword>
<keyword id="KW-0479">Metal-binding</keyword>
<keyword id="KW-0547">Nucleotide-binding</keyword>
<evidence type="ECO:0000255" key="1">
    <source>
        <dbReference type="HAMAP-Rule" id="MF_00453"/>
    </source>
</evidence>
<comment type="function">
    <text evidence="1">Involved in the gluconeogenesis. Catalyzes the conversion of oxaloacetate (OAA) to phosphoenolpyruvate (PEP) through direct phosphoryl transfer between the nucleoside triphosphate and OAA.</text>
</comment>
<comment type="catalytic activity">
    <reaction evidence="1">
        <text>oxaloacetate + ATP = phosphoenolpyruvate + ADP + CO2</text>
        <dbReference type="Rhea" id="RHEA:18617"/>
        <dbReference type="ChEBI" id="CHEBI:16452"/>
        <dbReference type="ChEBI" id="CHEBI:16526"/>
        <dbReference type="ChEBI" id="CHEBI:30616"/>
        <dbReference type="ChEBI" id="CHEBI:58702"/>
        <dbReference type="ChEBI" id="CHEBI:456216"/>
        <dbReference type="EC" id="4.1.1.49"/>
    </reaction>
</comment>
<comment type="cofactor">
    <cofactor evidence="1">
        <name>Mn(2+)</name>
        <dbReference type="ChEBI" id="CHEBI:29035"/>
    </cofactor>
    <text evidence="1">Binds 1 Mn(2+) ion per subunit.</text>
</comment>
<comment type="pathway">
    <text evidence="1">Carbohydrate biosynthesis; gluconeogenesis.</text>
</comment>
<comment type="subunit">
    <text evidence="1">Monomer.</text>
</comment>
<comment type="subcellular location">
    <subcellularLocation>
        <location evidence="1">Cytoplasm</location>
    </subcellularLocation>
</comment>
<comment type="similarity">
    <text evidence="1">Belongs to the phosphoenolpyruvate carboxykinase (ATP) family.</text>
</comment>
<protein>
    <recommendedName>
        <fullName evidence="1">Phosphoenolpyruvate carboxykinase (ATP)</fullName>
        <shortName evidence="1">PCK</shortName>
        <shortName evidence="1">PEP carboxykinase</shortName>
        <shortName evidence="1">PEPCK</shortName>
        <ecNumber evidence="1">4.1.1.49</ecNumber>
    </recommendedName>
</protein>
<proteinExistence type="inferred from homology"/>
<organism>
    <name type="scientific">Coxiella burnetii (strain RSA 331 / Henzerling II)</name>
    <dbReference type="NCBI Taxonomy" id="360115"/>
    <lineage>
        <taxon>Bacteria</taxon>
        <taxon>Pseudomonadati</taxon>
        <taxon>Pseudomonadota</taxon>
        <taxon>Gammaproteobacteria</taxon>
        <taxon>Legionellales</taxon>
        <taxon>Coxiellaceae</taxon>
        <taxon>Coxiella</taxon>
    </lineage>
</organism>
<dbReference type="EC" id="4.1.1.49" evidence="1"/>
<dbReference type="EMBL" id="CP000890">
    <property type="protein sequence ID" value="ABX78495.1"/>
    <property type="molecule type" value="Genomic_DNA"/>
</dbReference>
<dbReference type="RefSeq" id="WP_010958647.1">
    <property type="nucleotide sequence ID" value="NC_010117.1"/>
</dbReference>
<dbReference type="SMR" id="A9NBT9"/>
<dbReference type="KEGG" id="cbs:COXBURSA331_A2217"/>
<dbReference type="HOGENOM" id="CLU_018247_0_1_6"/>
<dbReference type="UniPathway" id="UPA00138"/>
<dbReference type="GO" id="GO:0005829">
    <property type="term" value="C:cytosol"/>
    <property type="evidence" value="ECO:0007669"/>
    <property type="project" value="TreeGrafter"/>
</dbReference>
<dbReference type="GO" id="GO:0005524">
    <property type="term" value="F:ATP binding"/>
    <property type="evidence" value="ECO:0007669"/>
    <property type="project" value="UniProtKB-UniRule"/>
</dbReference>
<dbReference type="GO" id="GO:0046872">
    <property type="term" value="F:metal ion binding"/>
    <property type="evidence" value="ECO:0007669"/>
    <property type="project" value="UniProtKB-KW"/>
</dbReference>
<dbReference type="GO" id="GO:0004612">
    <property type="term" value="F:phosphoenolpyruvate carboxykinase (ATP) activity"/>
    <property type="evidence" value="ECO:0007669"/>
    <property type="project" value="UniProtKB-UniRule"/>
</dbReference>
<dbReference type="GO" id="GO:0006094">
    <property type="term" value="P:gluconeogenesis"/>
    <property type="evidence" value="ECO:0007669"/>
    <property type="project" value="UniProtKB-UniRule"/>
</dbReference>
<dbReference type="CDD" id="cd00484">
    <property type="entry name" value="PEPCK_ATP"/>
    <property type="match status" value="1"/>
</dbReference>
<dbReference type="Gene3D" id="3.90.228.20">
    <property type="match status" value="1"/>
</dbReference>
<dbReference type="Gene3D" id="3.40.449.10">
    <property type="entry name" value="Phosphoenolpyruvate Carboxykinase, domain 1"/>
    <property type="match status" value="1"/>
</dbReference>
<dbReference type="Gene3D" id="2.170.8.10">
    <property type="entry name" value="Phosphoenolpyruvate Carboxykinase, domain 2"/>
    <property type="match status" value="1"/>
</dbReference>
<dbReference type="HAMAP" id="MF_00453">
    <property type="entry name" value="PEPCK_ATP"/>
    <property type="match status" value="1"/>
</dbReference>
<dbReference type="InterPro" id="IPR001272">
    <property type="entry name" value="PEP_carboxykinase_ATP"/>
</dbReference>
<dbReference type="InterPro" id="IPR013035">
    <property type="entry name" value="PEP_carboxykinase_C"/>
</dbReference>
<dbReference type="InterPro" id="IPR008210">
    <property type="entry name" value="PEP_carboxykinase_N"/>
</dbReference>
<dbReference type="InterPro" id="IPR015994">
    <property type="entry name" value="PEPCK_ATP_CS"/>
</dbReference>
<dbReference type="NCBIfam" id="TIGR00224">
    <property type="entry name" value="pckA"/>
    <property type="match status" value="1"/>
</dbReference>
<dbReference type="NCBIfam" id="NF006820">
    <property type="entry name" value="PRK09344.1-2"/>
    <property type="match status" value="1"/>
</dbReference>
<dbReference type="NCBIfam" id="NF006821">
    <property type="entry name" value="PRK09344.1-3"/>
    <property type="match status" value="1"/>
</dbReference>
<dbReference type="NCBIfam" id="NF006823">
    <property type="entry name" value="PRK09344.1-5"/>
    <property type="match status" value="1"/>
</dbReference>
<dbReference type="PANTHER" id="PTHR30031:SF0">
    <property type="entry name" value="PHOSPHOENOLPYRUVATE CARBOXYKINASE (ATP)"/>
    <property type="match status" value="1"/>
</dbReference>
<dbReference type="PANTHER" id="PTHR30031">
    <property type="entry name" value="PHOSPHOENOLPYRUVATE CARBOXYKINASE ATP"/>
    <property type="match status" value="1"/>
</dbReference>
<dbReference type="Pfam" id="PF01293">
    <property type="entry name" value="PEPCK_ATP"/>
    <property type="match status" value="1"/>
</dbReference>
<dbReference type="PIRSF" id="PIRSF006294">
    <property type="entry name" value="PEP_crbxkin"/>
    <property type="match status" value="1"/>
</dbReference>
<dbReference type="SUPFAM" id="SSF68923">
    <property type="entry name" value="PEP carboxykinase N-terminal domain"/>
    <property type="match status" value="1"/>
</dbReference>
<dbReference type="SUPFAM" id="SSF53795">
    <property type="entry name" value="PEP carboxykinase-like"/>
    <property type="match status" value="1"/>
</dbReference>
<dbReference type="PROSITE" id="PS00532">
    <property type="entry name" value="PEPCK_ATP"/>
    <property type="match status" value="1"/>
</dbReference>
<gene>
    <name evidence="1" type="primary">pckA</name>
    <name type="ordered locus">COXBURSA331_A2217</name>
</gene>
<reference key="1">
    <citation type="submission" date="2007-11" db="EMBL/GenBank/DDBJ databases">
        <title>Genome sequencing of phylogenetically and phenotypically diverse Coxiella burnetii isolates.</title>
        <authorList>
            <person name="Seshadri R."/>
            <person name="Samuel J.E."/>
        </authorList>
    </citation>
    <scope>NUCLEOTIDE SEQUENCE [LARGE SCALE GENOMIC DNA]</scope>
    <source>
        <strain>RSA 331 / Henzerling II</strain>
    </source>
</reference>
<feature type="chain" id="PRO_1000080993" description="Phosphoenolpyruvate carboxykinase (ATP)">
    <location>
        <begin position="1"/>
        <end position="517"/>
    </location>
</feature>
<feature type="binding site" evidence="1">
    <location>
        <position position="46"/>
    </location>
    <ligand>
        <name>substrate</name>
    </ligand>
</feature>
<feature type="binding site" evidence="1">
    <location>
        <position position="180"/>
    </location>
    <ligand>
        <name>substrate</name>
    </ligand>
</feature>
<feature type="binding site" evidence="1">
    <location>
        <position position="186"/>
    </location>
    <ligand>
        <name>ATP</name>
        <dbReference type="ChEBI" id="CHEBI:30616"/>
    </ligand>
</feature>
<feature type="binding site" evidence="1">
    <location>
        <position position="186"/>
    </location>
    <ligand>
        <name>Mn(2+)</name>
        <dbReference type="ChEBI" id="CHEBI:29035"/>
    </ligand>
</feature>
<feature type="binding site" evidence="1">
    <location>
        <position position="186"/>
    </location>
    <ligand>
        <name>substrate</name>
    </ligand>
</feature>
<feature type="binding site" evidence="1">
    <location>
        <position position="205"/>
    </location>
    <ligand>
        <name>ATP</name>
        <dbReference type="ChEBI" id="CHEBI:30616"/>
    </ligand>
</feature>
<feature type="binding site" evidence="1">
    <location>
        <position position="205"/>
    </location>
    <ligand>
        <name>Mn(2+)</name>
        <dbReference type="ChEBI" id="CHEBI:29035"/>
    </ligand>
</feature>
<feature type="binding site" evidence="1">
    <location>
        <begin position="221"/>
        <end position="229"/>
    </location>
    <ligand>
        <name>ATP</name>
        <dbReference type="ChEBI" id="CHEBI:30616"/>
    </ligand>
</feature>
<feature type="binding site" evidence="1">
    <location>
        <position position="242"/>
    </location>
    <ligand>
        <name>Mn(2+)</name>
        <dbReference type="ChEBI" id="CHEBI:29035"/>
    </ligand>
</feature>
<feature type="binding site" evidence="1">
    <location>
        <position position="270"/>
    </location>
    <ligand>
        <name>ATP</name>
        <dbReference type="ChEBI" id="CHEBI:30616"/>
    </ligand>
</feature>
<feature type="binding site" evidence="1">
    <location>
        <position position="306"/>
    </location>
    <ligand>
        <name>ATP</name>
        <dbReference type="ChEBI" id="CHEBI:30616"/>
    </ligand>
</feature>
<feature type="binding site" evidence="1">
    <location>
        <position position="306"/>
    </location>
    <ligand>
        <name>substrate</name>
    </ligand>
</feature>
<feature type="binding site" evidence="1">
    <location>
        <position position="433"/>
    </location>
    <ligand>
        <name>ATP</name>
        <dbReference type="ChEBI" id="CHEBI:30616"/>
    </ligand>
</feature>
<accession>A9NBT9</accession>